<feature type="chain" id="PRO_1000117024" description="Elongation factor 4">
    <location>
        <begin position="1"/>
        <end position="599"/>
    </location>
</feature>
<feature type="domain" description="tr-type G">
    <location>
        <begin position="2"/>
        <end position="184"/>
    </location>
</feature>
<feature type="binding site" evidence="1">
    <location>
        <begin position="14"/>
        <end position="19"/>
    </location>
    <ligand>
        <name>GTP</name>
        <dbReference type="ChEBI" id="CHEBI:37565"/>
    </ligand>
</feature>
<feature type="binding site" evidence="1">
    <location>
        <begin position="131"/>
        <end position="134"/>
    </location>
    <ligand>
        <name>GTP</name>
        <dbReference type="ChEBI" id="CHEBI:37565"/>
    </ligand>
</feature>
<reference key="1">
    <citation type="journal article" date="2009" name="PLoS Genet.">
        <title>Organised genome dynamics in the Escherichia coli species results in highly diverse adaptive paths.</title>
        <authorList>
            <person name="Touchon M."/>
            <person name="Hoede C."/>
            <person name="Tenaillon O."/>
            <person name="Barbe V."/>
            <person name="Baeriswyl S."/>
            <person name="Bidet P."/>
            <person name="Bingen E."/>
            <person name="Bonacorsi S."/>
            <person name="Bouchier C."/>
            <person name="Bouvet O."/>
            <person name="Calteau A."/>
            <person name="Chiapello H."/>
            <person name="Clermont O."/>
            <person name="Cruveiller S."/>
            <person name="Danchin A."/>
            <person name="Diard M."/>
            <person name="Dossat C."/>
            <person name="Karoui M.E."/>
            <person name="Frapy E."/>
            <person name="Garry L."/>
            <person name="Ghigo J.M."/>
            <person name="Gilles A.M."/>
            <person name="Johnson J."/>
            <person name="Le Bouguenec C."/>
            <person name="Lescat M."/>
            <person name="Mangenot S."/>
            <person name="Martinez-Jehanne V."/>
            <person name="Matic I."/>
            <person name="Nassif X."/>
            <person name="Oztas S."/>
            <person name="Petit M.A."/>
            <person name="Pichon C."/>
            <person name="Rouy Z."/>
            <person name="Ruf C.S."/>
            <person name="Schneider D."/>
            <person name="Tourret J."/>
            <person name="Vacherie B."/>
            <person name="Vallenet D."/>
            <person name="Medigue C."/>
            <person name="Rocha E.P.C."/>
            <person name="Denamur E."/>
        </authorList>
    </citation>
    <scope>NUCLEOTIDE SEQUENCE [LARGE SCALE GENOMIC DNA]</scope>
    <source>
        <strain>UMN026 / ExPEC</strain>
    </source>
</reference>
<organism>
    <name type="scientific">Escherichia coli O17:K52:H18 (strain UMN026 / ExPEC)</name>
    <dbReference type="NCBI Taxonomy" id="585056"/>
    <lineage>
        <taxon>Bacteria</taxon>
        <taxon>Pseudomonadati</taxon>
        <taxon>Pseudomonadota</taxon>
        <taxon>Gammaproteobacteria</taxon>
        <taxon>Enterobacterales</taxon>
        <taxon>Enterobacteriaceae</taxon>
        <taxon>Escherichia</taxon>
    </lineage>
</organism>
<protein>
    <recommendedName>
        <fullName evidence="1">Elongation factor 4</fullName>
        <shortName evidence="1">EF-4</shortName>
        <ecNumber evidence="1">3.6.5.n1</ecNumber>
    </recommendedName>
    <alternativeName>
        <fullName evidence="1">Ribosomal back-translocase LepA</fullName>
    </alternativeName>
</protein>
<accession>B7N6F7</accession>
<sequence length="599" mass="66570">MKNIRNFSIIAHIDHGKSTLSDRIIQICGGLSDREMEAQVLDSMDLERERGITIKAQSVTLDYKASDGETYQLNFIDTPGHVDFSYEVSRSLAACEGALLVVDAGQGVEAQTLANCYTAMEMDLEVVPVLNKIDLPAADPERVAEEIEDIVGIDATDAVRCSAKTGVGVQDVLERLVRDIPPPEGDPEGPLQALIIDSWFDNYLGVVSLIRIKNGTLRKGDKVKVMSTGQTYNADRLGIFTPKQVDRTELKCGEVGWLVCAIKDIHGAPVGDTLTLARNPAEKALPGFKKVKPQVYAGLFPVSSDDYEAFRDALGKLSLNDASLFYEPESSSALGFGFRCGFLGLLHMEIIQERLEREYDLDLITTAPTVVYEVETTSREVIYVDSPSKLPAVNNIYELREPIAECHMLLPQAYLGNVITLCVEKRGVQTNMVYHGNQVALTYEIPMAEVVLDFFDRLKSTSRGYASLDYNFKRFQASDMVRVDVLINGERVDALALITHRDNSQNRGRELVEKMKDLIPRQQFDIAIQAAIGTHIIARSTVKQLRKNVLAKCYGGDISRKKKLLQKQKEGKKRMKQIGNVELPQEAFLAILHVGKDNK</sequence>
<proteinExistence type="inferred from homology"/>
<evidence type="ECO:0000255" key="1">
    <source>
        <dbReference type="HAMAP-Rule" id="MF_00071"/>
    </source>
</evidence>
<name>LEPA_ECOLU</name>
<gene>
    <name evidence="1" type="primary">lepA</name>
    <name type="ordered locus">ECUMN_2891</name>
</gene>
<dbReference type="EC" id="3.6.5.n1" evidence="1"/>
<dbReference type="EMBL" id="CU928163">
    <property type="protein sequence ID" value="CAR14066.1"/>
    <property type="molecule type" value="Genomic_DNA"/>
</dbReference>
<dbReference type="RefSeq" id="WP_000790168.1">
    <property type="nucleotide sequence ID" value="NC_011751.1"/>
</dbReference>
<dbReference type="RefSeq" id="YP_002413592.1">
    <property type="nucleotide sequence ID" value="NC_011751.1"/>
</dbReference>
<dbReference type="SMR" id="B7N6F7"/>
<dbReference type="STRING" id="585056.ECUMN_2891"/>
<dbReference type="GeneID" id="93774522"/>
<dbReference type="KEGG" id="eum:ECUMN_2891"/>
<dbReference type="PATRIC" id="fig|585056.7.peg.3076"/>
<dbReference type="HOGENOM" id="CLU_009995_3_3_6"/>
<dbReference type="Proteomes" id="UP000007097">
    <property type="component" value="Chromosome"/>
</dbReference>
<dbReference type="GO" id="GO:0005886">
    <property type="term" value="C:plasma membrane"/>
    <property type="evidence" value="ECO:0007669"/>
    <property type="project" value="UniProtKB-SubCell"/>
</dbReference>
<dbReference type="GO" id="GO:0005525">
    <property type="term" value="F:GTP binding"/>
    <property type="evidence" value="ECO:0007669"/>
    <property type="project" value="UniProtKB-UniRule"/>
</dbReference>
<dbReference type="GO" id="GO:0003924">
    <property type="term" value="F:GTPase activity"/>
    <property type="evidence" value="ECO:0007669"/>
    <property type="project" value="UniProtKB-UniRule"/>
</dbReference>
<dbReference type="GO" id="GO:0097216">
    <property type="term" value="F:guanosine tetraphosphate binding"/>
    <property type="evidence" value="ECO:0007669"/>
    <property type="project" value="UniProtKB-ARBA"/>
</dbReference>
<dbReference type="GO" id="GO:0043022">
    <property type="term" value="F:ribosome binding"/>
    <property type="evidence" value="ECO:0007669"/>
    <property type="project" value="UniProtKB-UniRule"/>
</dbReference>
<dbReference type="GO" id="GO:0003746">
    <property type="term" value="F:translation elongation factor activity"/>
    <property type="evidence" value="ECO:0007669"/>
    <property type="project" value="UniProtKB-UniRule"/>
</dbReference>
<dbReference type="GO" id="GO:0045727">
    <property type="term" value="P:positive regulation of translation"/>
    <property type="evidence" value="ECO:0007669"/>
    <property type="project" value="UniProtKB-UniRule"/>
</dbReference>
<dbReference type="CDD" id="cd03699">
    <property type="entry name" value="EF4_II"/>
    <property type="match status" value="1"/>
</dbReference>
<dbReference type="CDD" id="cd16260">
    <property type="entry name" value="EF4_III"/>
    <property type="match status" value="1"/>
</dbReference>
<dbReference type="CDD" id="cd01890">
    <property type="entry name" value="LepA"/>
    <property type="match status" value="1"/>
</dbReference>
<dbReference type="CDD" id="cd03709">
    <property type="entry name" value="lepA_C"/>
    <property type="match status" value="1"/>
</dbReference>
<dbReference type="FunFam" id="3.30.70.240:FF:000005">
    <property type="entry name" value="Elongation factor 4"/>
    <property type="match status" value="1"/>
</dbReference>
<dbReference type="FunFam" id="3.40.50.300:FF:000078">
    <property type="entry name" value="Elongation factor 4"/>
    <property type="match status" value="1"/>
</dbReference>
<dbReference type="FunFam" id="2.40.30.10:FF:000015">
    <property type="entry name" value="Translation factor GUF1, mitochondrial"/>
    <property type="match status" value="1"/>
</dbReference>
<dbReference type="FunFam" id="3.30.70.2570:FF:000001">
    <property type="entry name" value="Translation factor GUF1, mitochondrial"/>
    <property type="match status" value="1"/>
</dbReference>
<dbReference type="FunFam" id="3.30.70.870:FF:000004">
    <property type="entry name" value="Translation factor GUF1, mitochondrial"/>
    <property type="match status" value="1"/>
</dbReference>
<dbReference type="Gene3D" id="3.30.70.240">
    <property type="match status" value="1"/>
</dbReference>
<dbReference type="Gene3D" id="3.30.70.2570">
    <property type="entry name" value="Elongation factor 4, C-terminal domain"/>
    <property type="match status" value="1"/>
</dbReference>
<dbReference type="Gene3D" id="3.30.70.870">
    <property type="entry name" value="Elongation Factor G (Translational Gtpase), domain 3"/>
    <property type="match status" value="1"/>
</dbReference>
<dbReference type="Gene3D" id="3.40.50.300">
    <property type="entry name" value="P-loop containing nucleotide triphosphate hydrolases"/>
    <property type="match status" value="1"/>
</dbReference>
<dbReference type="Gene3D" id="2.40.30.10">
    <property type="entry name" value="Translation factors"/>
    <property type="match status" value="1"/>
</dbReference>
<dbReference type="HAMAP" id="MF_00071">
    <property type="entry name" value="LepA"/>
    <property type="match status" value="1"/>
</dbReference>
<dbReference type="InterPro" id="IPR006297">
    <property type="entry name" value="EF-4"/>
</dbReference>
<dbReference type="InterPro" id="IPR035647">
    <property type="entry name" value="EFG_III/V"/>
</dbReference>
<dbReference type="InterPro" id="IPR000640">
    <property type="entry name" value="EFG_V-like"/>
</dbReference>
<dbReference type="InterPro" id="IPR004161">
    <property type="entry name" value="EFTu-like_2"/>
</dbReference>
<dbReference type="InterPro" id="IPR031157">
    <property type="entry name" value="G_TR_CS"/>
</dbReference>
<dbReference type="InterPro" id="IPR038363">
    <property type="entry name" value="LepA_C_sf"/>
</dbReference>
<dbReference type="InterPro" id="IPR013842">
    <property type="entry name" value="LepA_CTD"/>
</dbReference>
<dbReference type="InterPro" id="IPR035654">
    <property type="entry name" value="LepA_IV"/>
</dbReference>
<dbReference type="InterPro" id="IPR027417">
    <property type="entry name" value="P-loop_NTPase"/>
</dbReference>
<dbReference type="InterPro" id="IPR005225">
    <property type="entry name" value="Small_GTP-bd"/>
</dbReference>
<dbReference type="InterPro" id="IPR000795">
    <property type="entry name" value="T_Tr_GTP-bd_dom"/>
</dbReference>
<dbReference type="NCBIfam" id="TIGR01393">
    <property type="entry name" value="lepA"/>
    <property type="match status" value="1"/>
</dbReference>
<dbReference type="NCBIfam" id="TIGR00231">
    <property type="entry name" value="small_GTP"/>
    <property type="match status" value="1"/>
</dbReference>
<dbReference type="PANTHER" id="PTHR43512:SF4">
    <property type="entry name" value="TRANSLATION FACTOR GUF1 HOMOLOG, CHLOROPLASTIC"/>
    <property type="match status" value="1"/>
</dbReference>
<dbReference type="PANTHER" id="PTHR43512">
    <property type="entry name" value="TRANSLATION FACTOR GUF1-RELATED"/>
    <property type="match status" value="1"/>
</dbReference>
<dbReference type="Pfam" id="PF00679">
    <property type="entry name" value="EFG_C"/>
    <property type="match status" value="1"/>
</dbReference>
<dbReference type="Pfam" id="PF00009">
    <property type="entry name" value="GTP_EFTU"/>
    <property type="match status" value="1"/>
</dbReference>
<dbReference type="Pfam" id="PF03144">
    <property type="entry name" value="GTP_EFTU_D2"/>
    <property type="match status" value="1"/>
</dbReference>
<dbReference type="Pfam" id="PF06421">
    <property type="entry name" value="LepA_C"/>
    <property type="match status" value="1"/>
</dbReference>
<dbReference type="PRINTS" id="PR00315">
    <property type="entry name" value="ELONGATNFCT"/>
</dbReference>
<dbReference type="SUPFAM" id="SSF54980">
    <property type="entry name" value="EF-G C-terminal domain-like"/>
    <property type="match status" value="2"/>
</dbReference>
<dbReference type="SUPFAM" id="SSF52540">
    <property type="entry name" value="P-loop containing nucleoside triphosphate hydrolases"/>
    <property type="match status" value="1"/>
</dbReference>
<dbReference type="PROSITE" id="PS00301">
    <property type="entry name" value="G_TR_1"/>
    <property type="match status" value="1"/>
</dbReference>
<dbReference type="PROSITE" id="PS51722">
    <property type="entry name" value="G_TR_2"/>
    <property type="match status" value="1"/>
</dbReference>
<comment type="function">
    <text evidence="1">Required for accurate and efficient protein synthesis under certain stress conditions. May act as a fidelity factor of the translation reaction, by catalyzing a one-codon backward translocation of tRNAs on improperly translocated ribosomes. Back-translocation proceeds from a post-translocation (POST) complex to a pre-translocation (PRE) complex, thus giving elongation factor G a second chance to translocate the tRNAs correctly. Binds to ribosomes in a GTP-dependent manner.</text>
</comment>
<comment type="catalytic activity">
    <reaction evidence="1">
        <text>GTP + H2O = GDP + phosphate + H(+)</text>
        <dbReference type="Rhea" id="RHEA:19669"/>
        <dbReference type="ChEBI" id="CHEBI:15377"/>
        <dbReference type="ChEBI" id="CHEBI:15378"/>
        <dbReference type="ChEBI" id="CHEBI:37565"/>
        <dbReference type="ChEBI" id="CHEBI:43474"/>
        <dbReference type="ChEBI" id="CHEBI:58189"/>
        <dbReference type="EC" id="3.6.5.n1"/>
    </reaction>
</comment>
<comment type="subcellular location">
    <subcellularLocation>
        <location evidence="1">Cell inner membrane</location>
        <topology evidence="1">Peripheral membrane protein</topology>
        <orientation evidence="1">Cytoplasmic side</orientation>
    </subcellularLocation>
</comment>
<comment type="similarity">
    <text evidence="1">Belongs to the TRAFAC class translation factor GTPase superfamily. Classic translation factor GTPase family. LepA subfamily.</text>
</comment>
<keyword id="KW-0997">Cell inner membrane</keyword>
<keyword id="KW-1003">Cell membrane</keyword>
<keyword id="KW-0342">GTP-binding</keyword>
<keyword id="KW-0378">Hydrolase</keyword>
<keyword id="KW-0472">Membrane</keyword>
<keyword id="KW-0547">Nucleotide-binding</keyword>
<keyword id="KW-0648">Protein biosynthesis</keyword>